<protein>
    <recommendedName>
        <fullName evidence="1">3-hydroxyacyl-[acyl-carrier-protein] dehydratase FabZ</fullName>
        <ecNumber evidence="1">4.2.1.59</ecNumber>
    </recommendedName>
    <alternativeName>
        <fullName evidence="1">(3R)-hydroxymyristoyl-[acyl-carrier-protein] dehydratase</fullName>
        <shortName evidence="1">(3R)-hydroxymyristoyl-ACP dehydrase</shortName>
    </alternativeName>
    <alternativeName>
        <fullName evidence="1">Beta-hydroxyacyl-ACP dehydratase</fullName>
    </alternativeName>
</protein>
<comment type="function">
    <text evidence="1">Involved in unsaturated fatty acids biosynthesis. Catalyzes the dehydration of short chain beta-hydroxyacyl-ACPs and long chain saturated and unsaturated beta-hydroxyacyl-ACPs.</text>
</comment>
<comment type="catalytic activity">
    <reaction evidence="1">
        <text>a (3R)-hydroxyacyl-[ACP] = a (2E)-enoyl-[ACP] + H2O</text>
        <dbReference type="Rhea" id="RHEA:13097"/>
        <dbReference type="Rhea" id="RHEA-COMP:9925"/>
        <dbReference type="Rhea" id="RHEA-COMP:9945"/>
        <dbReference type="ChEBI" id="CHEBI:15377"/>
        <dbReference type="ChEBI" id="CHEBI:78784"/>
        <dbReference type="ChEBI" id="CHEBI:78827"/>
        <dbReference type="EC" id="4.2.1.59"/>
    </reaction>
</comment>
<comment type="subcellular location">
    <subcellularLocation>
        <location evidence="1">Cytoplasm</location>
    </subcellularLocation>
</comment>
<comment type="similarity">
    <text evidence="1">Belongs to the thioester dehydratase family. FabZ subfamily.</text>
</comment>
<proteinExistence type="inferred from homology"/>
<dbReference type="EC" id="4.2.1.59" evidence="1"/>
<dbReference type="EMBL" id="Z83337">
    <property type="protein sequence ID" value="CAB05943.1"/>
    <property type="molecule type" value="Genomic_DNA"/>
</dbReference>
<dbReference type="EMBL" id="AL009126">
    <property type="protein sequence ID" value="CAB15654.2"/>
    <property type="molecule type" value="Genomic_DNA"/>
</dbReference>
<dbReference type="PIR" id="D70065">
    <property type="entry name" value="D70065"/>
</dbReference>
<dbReference type="RefSeq" id="NP_391518.2">
    <property type="nucleotide sequence ID" value="NC_000964.3"/>
</dbReference>
<dbReference type="RefSeq" id="WP_003221796.1">
    <property type="nucleotide sequence ID" value="NZ_OZ025638.1"/>
</dbReference>
<dbReference type="SMR" id="P94584"/>
<dbReference type="FunCoup" id="P94584">
    <property type="interactions" value="630"/>
</dbReference>
<dbReference type="STRING" id="224308.BSU36370"/>
<dbReference type="PaxDb" id="224308-BSU36370"/>
<dbReference type="EnsemblBacteria" id="CAB15654">
    <property type="protein sequence ID" value="CAB15654"/>
    <property type="gene ID" value="BSU_36370"/>
</dbReference>
<dbReference type="GeneID" id="86871749"/>
<dbReference type="GeneID" id="936918"/>
<dbReference type="KEGG" id="bsu:BSU36370"/>
<dbReference type="PATRIC" id="fig|224308.179.peg.3937"/>
<dbReference type="eggNOG" id="COG0764">
    <property type="taxonomic scope" value="Bacteria"/>
</dbReference>
<dbReference type="InParanoid" id="P94584"/>
<dbReference type="OrthoDB" id="9772788at2"/>
<dbReference type="PhylomeDB" id="P94584"/>
<dbReference type="BioCyc" id="BSUB:BSU36370-MONOMER"/>
<dbReference type="BioCyc" id="MetaCyc:BSU36370-MONOMER"/>
<dbReference type="PRO" id="PR:P94584"/>
<dbReference type="Proteomes" id="UP000001570">
    <property type="component" value="Chromosome"/>
</dbReference>
<dbReference type="GO" id="GO:0005737">
    <property type="term" value="C:cytoplasm"/>
    <property type="evidence" value="ECO:0007669"/>
    <property type="project" value="UniProtKB-SubCell"/>
</dbReference>
<dbReference type="GO" id="GO:0016020">
    <property type="term" value="C:membrane"/>
    <property type="evidence" value="ECO:0007669"/>
    <property type="project" value="GOC"/>
</dbReference>
<dbReference type="GO" id="GO:0019171">
    <property type="term" value="F:(3R)-hydroxyacyl-[acyl-carrier-protein] dehydratase activity"/>
    <property type="evidence" value="ECO:0007669"/>
    <property type="project" value="UniProtKB-EC"/>
</dbReference>
<dbReference type="GO" id="GO:0006633">
    <property type="term" value="P:fatty acid biosynthetic process"/>
    <property type="evidence" value="ECO:0007669"/>
    <property type="project" value="UniProtKB-UniRule"/>
</dbReference>
<dbReference type="GO" id="GO:0009245">
    <property type="term" value="P:lipid A biosynthetic process"/>
    <property type="evidence" value="ECO:0007669"/>
    <property type="project" value="UniProtKB-UniRule"/>
</dbReference>
<dbReference type="CDD" id="cd01288">
    <property type="entry name" value="FabZ"/>
    <property type="match status" value="1"/>
</dbReference>
<dbReference type="FunFam" id="3.10.129.10:FF:000001">
    <property type="entry name" value="3-hydroxyacyl-[acyl-carrier-protein] dehydratase FabZ"/>
    <property type="match status" value="1"/>
</dbReference>
<dbReference type="Gene3D" id="3.10.129.10">
    <property type="entry name" value="Hotdog Thioesterase"/>
    <property type="match status" value="1"/>
</dbReference>
<dbReference type="HAMAP" id="MF_00406">
    <property type="entry name" value="FabZ"/>
    <property type="match status" value="1"/>
</dbReference>
<dbReference type="InterPro" id="IPR013114">
    <property type="entry name" value="FabA_FabZ"/>
</dbReference>
<dbReference type="InterPro" id="IPR010084">
    <property type="entry name" value="FabZ"/>
</dbReference>
<dbReference type="InterPro" id="IPR029069">
    <property type="entry name" value="HotDog_dom_sf"/>
</dbReference>
<dbReference type="NCBIfam" id="TIGR01750">
    <property type="entry name" value="fabZ"/>
    <property type="match status" value="1"/>
</dbReference>
<dbReference type="NCBIfam" id="NF000582">
    <property type="entry name" value="PRK00006.1"/>
    <property type="match status" value="1"/>
</dbReference>
<dbReference type="PANTHER" id="PTHR30272">
    <property type="entry name" value="3-HYDROXYACYL-[ACYL-CARRIER-PROTEIN] DEHYDRATASE"/>
    <property type="match status" value="1"/>
</dbReference>
<dbReference type="PANTHER" id="PTHR30272:SF1">
    <property type="entry name" value="3-HYDROXYACYL-[ACYL-CARRIER-PROTEIN] DEHYDRATASE"/>
    <property type="match status" value="1"/>
</dbReference>
<dbReference type="Pfam" id="PF07977">
    <property type="entry name" value="FabA"/>
    <property type="match status" value="1"/>
</dbReference>
<dbReference type="SUPFAM" id="SSF54637">
    <property type="entry name" value="Thioesterase/thiol ester dehydrase-isomerase"/>
    <property type="match status" value="1"/>
</dbReference>
<organism>
    <name type="scientific">Bacillus subtilis (strain 168)</name>
    <dbReference type="NCBI Taxonomy" id="224308"/>
    <lineage>
        <taxon>Bacteria</taxon>
        <taxon>Bacillati</taxon>
        <taxon>Bacillota</taxon>
        <taxon>Bacilli</taxon>
        <taxon>Bacillales</taxon>
        <taxon>Bacillaceae</taxon>
        <taxon>Bacillus</taxon>
    </lineage>
</organism>
<gene>
    <name evidence="1" type="primary">fabZ</name>
    <name type="synonym">ywpB</name>
    <name type="ordered locus">BSU36370</name>
</gene>
<keyword id="KW-0963">Cytoplasm</keyword>
<keyword id="KW-0441">Lipid A biosynthesis</keyword>
<keyword id="KW-0444">Lipid biosynthesis</keyword>
<keyword id="KW-0443">Lipid metabolism</keyword>
<keyword id="KW-0456">Lyase</keyword>
<keyword id="KW-1185">Reference proteome</keyword>
<sequence length="141" mass="15740">MLDTQQIKEIIPHRYPFLLVDRITEVEEGKRAKGYKNVTANEEFFNGHFPQYPVMPGVLIVEALAQVGAVAMLIKEENRGRLAFFAGIDNCRFKKQVKPGDQLHLEVEIIRARGTIGRGKGVATVDGEVVCEVELTFALGE</sequence>
<evidence type="ECO:0000255" key="1">
    <source>
        <dbReference type="HAMAP-Rule" id="MF_00406"/>
    </source>
</evidence>
<evidence type="ECO:0000305" key="2"/>
<accession>P94584</accession>
<name>FABZ_BACSU</name>
<reference key="1">
    <citation type="journal article" date="1997" name="Microbiology">
        <title>The Bacillus subtilis genome from gerBC (311 degrees) to licR (334 degrees).</title>
        <authorList>
            <person name="Presecan E."/>
            <person name="Moszer I."/>
            <person name="Boursier L."/>
            <person name="Cruz Ramos H."/>
            <person name="De La Fuente V."/>
            <person name="Hullo M.-F."/>
            <person name="Lelong C."/>
            <person name="Schleich S."/>
            <person name="Sekowska A."/>
            <person name="Song B.H."/>
            <person name="Villani G."/>
            <person name="Kunst F."/>
            <person name="Danchin A."/>
            <person name="Glaser P."/>
        </authorList>
    </citation>
    <scope>NUCLEOTIDE SEQUENCE [GENOMIC DNA]</scope>
    <source>
        <strain>168</strain>
    </source>
</reference>
<reference key="2">
    <citation type="journal article" date="1997" name="Nature">
        <title>The complete genome sequence of the Gram-positive bacterium Bacillus subtilis.</title>
        <authorList>
            <person name="Kunst F."/>
            <person name="Ogasawara N."/>
            <person name="Moszer I."/>
            <person name="Albertini A.M."/>
            <person name="Alloni G."/>
            <person name="Azevedo V."/>
            <person name="Bertero M.G."/>
            <person name="Bessieres P."/>
            <person name="Bolotin A."/>
            <person name="Borchert S."/>
            <person name="Borriss R."/>
            <person name="Boursier L."/>
            <person name="Brans A."/>
            <person name="Braun M."/>
            <person name="Brignell S.C."/>
            <person name="Bron S."/>
            <person name="Brouillet S."/>
            <person name="Bruschi C.V."/>
            <person name="Caldwell B."/>
            <person name="Capuano V."/>
            <person name="Carter N.M."/>
            <person name="Choi S.-K."/>
            <person name="Codani J.-J."/>
            <person name="Connerton I.F."/>
            <person name="Cummings N.J."/>
            <person name="Daniel R.A."/>
            <person name="Denizot F."/>
            <person name="Devine K.M."/>
            <person name="Duesterhoeft A."/>
            <person name="Ehrlich S.D."/>
            <person name="Emmerson P.T."/>
            <person name="Entian K.-D."/>
            <person name="Errington J."/>
            <person name="Fabret C."/>
            <person name="Ferrari E."/>
            <person name="Foulger D."/>
            <person name="Fritz C."/>
            <person name="Fujita M."/>
            <person name="Fujita Y."/>
            <person name="Fuma S."/>
            <person name="Galizzi A."/>
            <person name="Galleron N."/>
            <person name="Ghim S.-Y."/>
            <person name="Glaser P."/>
            <person name="Goffeau A."/>
            <person name="Golightly E.J."/>
            <person name="Grandi G."/>
            <person name="Guiseppi G."/>
            <person name="Guy B.J."/>
            <person name="Haga K."/>
            <person name="Haiech J."/>
            <person name="Harwood C.R."/>
            <person name="Henaut A."/>
            <person name="Hilbert H."/>
            <person name="Holsappel S."/>
            <person name="Hosono S."/>
            <person name="Hullo M.-F."/>
            <person name="Itaya M."/>
            <person name="Jones L.-M."/>
            <person name="Joris B."/>
            <person name="Karamata D."/>
            <person name="Kasahara Y."/>
            <person name="Klaerr-Blanchard M."/>
            <person name="Klein C."/>
            <person name="Kobayashi Y."/>
            <person name="Koetter P."/>
            <person name="Koningstein G."/>
            <person name="Krogh S."/>
            <person name="Kumano M."/>
            <person name="Kurita K."/>
            <person name="Lapidus A."/>
            <person name="Lardinois S."/>
            <person name="Lauber J."/>
            <person name="Lazarevic V."/>
            <person name="Lee S.-M."/>
            <person name="Levine A."/>
            <person name="Liu H."/>
            <person name="Masuda S."/>
            <person name="Mauel C."/>
            <person name="Medigue C."/>
            <person name="Medina N."/>
            <person name="Mellado R.P."/>
            <person name="Mizuno M."/>
            <person name="Moestl D."/>
            <person name="Nakai S."/>
            <person name="Noback M."/>
            <person name="Noone D."/>
            <person name="O'Reilly M."/>
            <person name="Ogawa K."/>
            <person name="Ogiwara A."/>
            <person name="Oudega B."/>
            <person name="Park S.-H."/>
            <person name="Parro V."/>
            <person name="Pohl T.M."/>
            <person name="Portetelle D."/>
            <person name="Porwollik S."/>
            <person name="Prescott A.M."/>
            <person name="Presecan E."/>
            <person name="Pujic P."/>
            <person name="Purnelle B."/>
            <person name="Rapoport G."/>
            <person name="Rey M."/>
            <person name="Reynolds S."/>
            <person name="Rieger M."/>
            <person name="Rivolta C."/>
            <person name="Rocha E."/>
            <person name="Roche B."/>
            <person name="Rose M."/>
            <person name="Sadaie Y."/>
            <person name="Sato T."/>
            <person name="Scanlan E."/>
            <person name="Schleich S."/>
            <person name="Schroeter R."/>
            <person name="Scoffone F."/>
            <person name="Sekiguchi J."/>
            <person name="Sekowska A."/>
            <person name="Seror S.J."/>
            <person name="Serror P."/>
            <person name="Shin B.-S."/>
            <person name="Soldo B."/>
            <person name="Sorokin A."/>
            <person name="Tacconi E."/>
            <person name="Takagi T."/>
            <person name="Takahashi H."/>
            <person name="Takemaru K."/>
            <person name="Takeuchi M."/>
            <person name="Tamakoshi A."/>
            <person name="Tanaka T."/>
            <person name="Terpstra P."/>
            <person name="Tognoni A."/>
            <person name="Tosato V."/>
            <person name="Uchiyama S."/>
            <person name="Vandenbol M."/>
            <person name="Vannier F."/>
            <person name="Vassarotti A."/>
            <person name="Viari A."/>
            <person name="Wambutt R."/>
            <person name="Wedler E."/>
            <person name="Wedler H."/>
            <person name="Weitzenegger T."/>
            <person name="Winters P."/>
            <person name="Wipat A."/>
            <person name="Yamamoto H."/>
            <person name="Yamane K."/>
            <person name="Yasumoto K."/>
            <person name="Yata K."/>
            <person name="Yoshida K."/>
            <person name="Yoshikawa H.-F."/>
            <person name="Zumstein E."/>
            <person name="Yoshikawa H."/>
            <person name="Danchin A."/>
        </authorList>
    </citation>
    <scope>NUCLEOTIDE SEQUENCE [LARGE SCALE GENOMIC DNA]</scope>
    <source>
        <strain>168</strain>
    </source>
</reference>
<reference key="3">
    <citation type="journal article" date="2009" name="Microbiology">
        <title>From a consortium sequence to a unified sequence: the Bacillus subtilis 168 reference genome a decade later.</title>
        <authorList>
            <person name="Barbe V."/>
            <person name="Cruveiller S."/>
            <person name="Kunst F."/>
            <person name="Lenoble P."/>
            <person name="Meurice G."/>
            <person name="Sekowska A."/>
            <person name="Vallenet D."/>
            <person name="Wang T."/>
            <person name="Moszer I."/>
            <person name="Medigue C."/>
            <person name="Danchin A."/>
        </authorList>
    </citation>
    <scope>SEQUENCE REVISION TO C-TERMINUS</scope>
</reference>
<feature type="chain" id="PRO_0000091642" description="3-hydroxyacyl-[acyl-carrier-protein] dehydratase FabZ">
    <location>
        <begin position="1"/>
        <end position="141"/>
    </location>
</feature>
<feature type="active site" evidence="1">
    <location>
        <position position="48"/>
    </location>
</feature>
<feature type="sequence conflict" description="In Ref. 1; CAB05943." evidence="2" ref="1">
    <original>EVVCEVELTFAL</original>
    <variation>KSFAN</variation>
    <location>
        <begin position="128"/>
        <end position="139"/>
    </location>
</feature>